<protein>
    <recommendedName>
        <fullName evidence="1">Large ribosomal subunit protein bL28</fullName>
    </recommendedName>
    <alternativeName>
        <fullName evidence="2">50S ribosomal protein L28</fullName>
    </alternativeName>
</protein>
<reference key="1">
    <citation type="submission" date="2007-07" db="EMBL/GenBank/DDBJ databases">
        <title>Complete genome sequence of Campylobacter jejuni subsp doylei 269.97 isolated from human blood.</title>
        <authorList>
            <person name="Fouts D.E."/>
            <person name="Mongodin E.F."/>
            <person name="Puiu D."/>
            <person name="Sebastian Y."/>
            <person name="Miller W.G."/>
            <person name="Mandrell R.E."/>
            <person name="Lastovica A.J."/>
            <person name="Nelson K.E."/>
        </authorList>
    </citation>
    <scope>NUCLEOTIDE SEQUENCE [LARGE SCALE GENOMIC DNA]</scope>
    <source>
        <strain>ATCC BAA-1458 / RM4099 / 269.97</strain>
    </source>
</reference>
<evidence type="ECO:0000255" key="1">
    <source>
        <dbReference type="HAMAP-Rule" id="MF_00373"/>
    </source>
</evidence>
<evidence type="ECO:0000305" key="2"/>
<comment type="similarity">
    <text evidence="1">Belongs to the bacterial ribosomal protein bL28 family.</text>
</comment>
<proteinExistence type="inferred from homology"/>
<accession>A7H4T2</accession>
<dbReference type="EMBL" id="CP000768">
    <property type="protein sequence ID" value="ABS44129.1"/>
    <property type="molecule type" value="Genomic_DNA"/>
</dbReference>
<dbReference type="SMR" id="A7H4T2"/>
<dbReference type="KEGG" id="cjd:JJD26997_1489"/>
<dbReference type="HOGENOM" id="CLU_064548_7_2_7"/>
<dbReference type="Proteomes" id="UP000002302">
    <property type="component" value="Chromosome"/>
</dbReference>
<dbReference type="GO" id="GO:1990904">
    <property type="term" value="C:ribonucleoprotein complex"/>
    <property type="evidence" value="ECO:0007669"/>
    <property type="project" value="UniProtKB-KW"/>
</dbReference>
<dbReference type="GO" id="GO:0005840">
    <property type="term" value="C:ribosome"/>
    <property type="evidence" value="ECO:0007669"/>
    <property type="project" value="UniProtKB-KW"/>
</dbReference>
<dbReference type="GO" id="GO:0003735">
    <property type="term" value="F:structural constituent of ribosome"/>
    <property type="evidence" value="ECO:0007669"/>
    <property type="project" value="InterPro"/>
</dbReference>
<dbReference type="GO" id="GO:0006412">
    <property type="term" value="P:translation"/>
    <property type="evidence" value="ECO:0007669"/>
    <property type="project" value="UniProtKB-UniRule"/>
</dbReference>
<dbReference type="Gene3D" id="2.20.150.30">
    <property type="match status" value="1"/>
</dbReference>
<dbReference type="Gene3D" id="2.30.170.40">
    <property type="entry name" value="Ribosomal protein L28/L24"/>
    <property type="match status" value="1"/>
</dbReference>
<dbReference type="HAMAP" id="MF_00373">
    <property type="entry name" value="Ribosomal_bL28"/>
    <property type="match status" value="1"/>
</dbReference>
<dbReference type="InterPro" id="IPR050096">
    <property type="entry name" value="Bacterial_rp_bL28"/>
</dbReference>
<dbReference type="InterPro" id="IPR026569">
    <property type="entry name" value="Ribosomal_bL28"/>
</dbReference>
<dbReference type="InterPro" id="IPR034704">
    <property type="entry name" value="Ribosomal_bL28/bL31-like_sf"/>
</dbReference>
<dbReference type="InterPro" id="IPR001383">
    <property type="entry name" value="Ribosomal_bL28_bact-type"/>
</dbReference>
<dbReference type="InterPro" id="IPR037147">
    <property type="entry name" value="Ribosomal_bL28_sf"/>
</dbReference>
<dbReference type="NCBIfam" id="TIGR00009">
    <property type="entry name" value="L28"/>
    <property type="match status" value="1"/>
</dbReference>
<dbReference type="PANTHER" id="PTHR39080">
    <property type="entry name" value="50S RIBOSOMAL PROTEIN L28"/>
    <property type="match status" value="1"/>
</dbReference>
<dbReference type="PANTHER" id="PTHR39080:SF1">
    <property type="entry name" value="LARGE RIBOSOMAL SUBUNIT PROTEIN BL28A"/>
    <property type="match status" value="1"/>
</dbReference>
<dbReference type="Pfam" id="PF00830">
    <property type="entry name" value="Ribosomal_L28"/>
    <property type="match status" value="1"/>
</dbReference>
<dbReference type="SUPFAM" id="SSF143800">
    <property type="entry name" value="L28p-like"/>
    <property type="match status" value="1"/>
</dbReference>
<keyword id="KW-0687">Ribonucleoprotein</keyword>
<keyword id="KW-0689">Ribosomal protein</keyword>
<name>RL28_CAMJD</name>
<gene>
    <name evidence="1" type="primary">rpmB</name>
    <name type="ordered locus">JJD26997_1489</name>
</gene>
<feature type="chain" id="PRO_1000007201" description="Large ribosomal subunit protein bL28">
    <location>
        <begin position="1"/>
        <end position="64"/>
    </location>
</feature>
<organism>
    <name type="scientific">Campylobacter jejuni subsp. doylei (strain ATCC BAA-1458 / RM4099 / 269.97)</name>
    <dbReference type="NCBI Taxonomy" id="360109"/>
    <lineage>
        <taxon>Bacteria</taxon>
        <taxon>Pseudomonadati</taxon>
        <taxon>Campylobacterota</taxon>
        <taxon>Epsilonproteobacteria</taxon>
        <taxon>Campylobacterales</taxon>
        <taxon>Campylobacteraceae</taxon>
        <taxon>Campylobacter</taxon>
    </lineage>
</organism>
<sequence length="64" mass="7181">MARICQITGKGPMVGNNVSHANNKTKRRFLPNLRTVRVTLEDGTTKKMRIAASTLRTLKKQNSK</sequence>